<dbReference type="EMBL" id="AC005508">
    <property type="protein sequence ID" value="AAD14502.1"/>
    <property type="status" value="ALT_SEQ"/>
    <property type="molecule type" value="Genomic_DNA"/>
</dbReference>
<dbReference type="EMBL" id="CP002684">
    <property type="protein sequence ID" value="AEE30764.1"/>
    <property type="molecule type" value="Genomic_DNA"/>
</dbReference>
<dbReference type="EMBL" id="BT009727">
    <property type="protein sequence ID" value="AAP88361.1"/>
    <property type="molecule type" value="mRNA"/>
</dbReference>
<dbReference type="EMBL" id="AK228056">
    <property type="protein sequence ID" value="BAF00017.1"/>
    <property type="molecule type" value="mRNA"/>
</dbReference>
<dbReference type="EMBL" id="AY084913">
    <property type="protein sequence ID" value="AAM61475.1"/>
    <property type="molecule type" value="mRNA"/>
</dbReference>
<dbReference type="PIR" id="F86396">
    <property type="entry name" value="F86396"/>
</dbReference>
<dbReference type="SMR" id="Q8LFD3"/>
<dbReference type="BioGRID" id="24822">
    <property type="interactions" value="11"/>
</dbReference>
<dbReference type="STRING" id="3702.Q8LFD3"/>
<dbReference type="PaxDb" id="3702-AT1G26960.1"/>
<dbReference type="ProteomicsDB" id="246535"/>
<dbReference type="EnsemblPlants" id="AT1G26960.1">
    <property type="protein sequence ID" value="AT1G26960.1"/>
    <property type="gene ID" value="AT1G26960"/>
</dbReference>
<dbReference type="GeneID" id="839587"/>
<dbReference type="Gramene" id="AT1G26960.1">
    <property type="protein sequence ID" value="AT1G26960.1"/>
    <property type="gene ID" value="AT1G26960"/>
</dbReference>
<dbReference type="KEGG" id="ath:AT1G26960"/>
<dbReference type="Araport" id="AT1G26960"/>
<dbReference type="TAIR" id="AT1G26960">
    <property type="gene designation" value="ATHB23"/>
</dbReference>
<dbReference type="eggNOG" id="KOG0483">
    <property type="taxonomic scope" value="Eukaryota"/>
</dbReference>
<dbReference type="HOGENOM" id="CLU_060842_4_0_1"/>
<dbReference type="InParanoid" id="Q8LFD3"/>
<dbReference type="OMA" id="ECFSNMF"/>
<dbReference type="OrthoDB" id="6159439at2759"/>
<dbReference type="PhylomeDB" id="Q8LFD3"/>
<dbReference type="PRO" id="PR:Q8LFD3"/>
<dbReference type="Proteomes" id="UP000006548">
    <property type="component" value="Chromosome 1"/>
</dbReference>
<dbReference type="ExpressionAtlas" id="Q8LFD3">
    <property type="expression patterns" value="baseline and differential"/>
</dbReference>
<dbReference type="GO" id="GO:0005634">
    <property type="term" value="C:nucleus"/>
    <property type="evidence" value="ECO:0007669"/>
    <property type="project" value="UniProtKB-SubCell"/>
</dbReference>
<dbReference type="GO" id="GO:0003700">
    <property type="term" value="F:DNA-binding transcription factor activity"/>
    <property type="evidence" value="ECO:0000250"/>
    <property type="project" value="TAIR"/>
</dbReference>
<dbReference type="GO" id="GO:0000981">
    <property type="term" value="F:DNA-binding transcription factor activity, RNA polymerase II-specific"/>
    <property type="evidence" value="ECO:0007669"/>
    <property type="project" value="InterPro"/>
</dbReference>
<dbReference type="GO" id="GO:0000976">
    <property type="term" value="F:transcription cis-regulatory region binding"/>
    <property type="evidence" value="ECO:0000353"/>
    <property type="project" value="TAIR"/>
</dbReference>
<dbReference type="GO" id="GO:0048527">
    <property type="term" value="P:lateral root development"/>
    <property type="evidence" value="ECO:0000315"/>
    <property type="project" value="TAIR"/>
</dbReference>
<dbReference type="GO" id="GO:0010311">
    <property type="term" value="P:lateral root formation"/>
    <property type="evidence" value="ECO:0000314"/>
    <property type="project" value="TAIR"/>
</dbReference>
<dbReference type="GO" id="GO:0009739">
    <property type="term" value="P:response to gibberellin"/>
    <property type="evidence" value="ECO:0000270"/>
    <property type="project" value="TAIR"/>
</dbReference>
<dbReference type="GO" id="GO:0022622">
    <property type="term" value="P:root system development"/>
    <property type="evidence" value="ECO:0000314"/>
    <property type="project" value="TAIR"/>
</dbReference>
<dbReference type="CDD" id="cd00086">
    <property type="entry name" value="homeodomain"/>
    <property type="match status" value="1"/>
</dbReference>
<dbReference type="FunFam" id="1.10.10.60:FF:000200">
    <property type="entry name" value="Homeobox-leucine zipper protein ATHB-13"/>
    <property type="match status" value="1"/>
</dbReference>
<dbReference type="Gene3D" id="1.10.10.60">
    <property type="entry name" value="Homeodomain-like"/>
    <property type="match status" value="1"/>
</dbReference>
<dbReference type="InterPro" id="IPR001356">
    <property type="entry name" value="HD"/>
</dbReference>
<dbReference type="InterPro" id="IPR045224">
    <property type="entry name" value="HDZip_class_I_plant"/>
</dbReference>
<dbReference type="InterPro" id="IPR017970">
    <property type="entry name" value="Homeobox_CS"/>
</dbReference>
<dbReference type="InterPro" id="IPR009057">
    <property type="entry name" value="Homeodomain-like_sf"/>
</dbReference>
<dbReference type="InterPro" id="IPR000047">
    <property type="entry name" value="HTH_motif"/>
</dbReference>
<dbReference type="InterPro" id="IPR003106">
    <property type="entry name" value="Leu_zip_homeo"/>
</dbReference>
<dbReference type="PANTHER" id="PTHR24326">
    <property type="entry name" value="HOMEOBOX-LEUCINE ZIPPER PROTEIN"/>
    <property type="match status" value="1"/>
</dbReference>
<dbReference type="PANTHER" id="PTHR24326:SF617">
    <property type="entry name" value="HOMEOBOX-LEUCINE ZIPPER PROTEIN ATHB-23"/>
    <property type="match status" value="1"/>
</dbReference>
<dbReference type="Pfam" id="PF02183">
    <property type="entry name" value="HALZ"/>
    <property type="match status" value="1"/>
</dbReference>
<dbReference type="Pfam" id="PF00046">
    <property type="entry name" value="Homeodomain"/>
    <property type="match status" value="1"/>
</dbReference>
<dbReference type="PRINTS" id="PR00031">
    <property type="entry name" value="HTHREPRESSR"/>
</dbReference>
<dbReference type="SMART" id="SM00340">
    <property type="entry name" value="HALZ"/>
    <property type="match status" value="1"/>
</dbReference>
<dbReference type="SMART" id="SM00389">
    <property type="entry name" value="HOX"/>
    <property type="match status" value="1"/>
</dbReference>
<dbReference type="SUPFAM" id="SSF46689">
    <property type="entry name" value="Homeodomain-like"/>
    <property type="match status" value="1"/>
</dbReference>
<dbReference type="PROSITE" id="PS00027">
    <property type="entry name" value="HOMEOBOX_1"/>
    <property type="match status" value="1"/>
</dbReference>
<dbReference type="PROSITE" id="PS50071">
    <property type="entry name" value="HOMEOBOX_2"/>
    <property type="match status" value="1"/>
</dbReference>
<evidence type="ECO:0000250" key="1"/>
<evidence type="ECO:0000255" key="2">
    <source>
        <dbReference type="PROSITE-ProRule" id="PRU00108"/>
    </source>
</evidence>
<evidence type="ECO:0000269" key="3">
    <source>
    </source>
</evidence>
<evidence type="ECO:0000269" key="4">
    <source>
    </source>
</evidence>
<evidence type="ECO:0000305" key="5"/>
<gene>
    <name type="primary">ATHB-23</name>
    <name type="ordered locus">At1g26960</name>
    <name type="ORF">T2P11.15</name>
</gene>
<proteinExistence type="evidence at transcript level"/>
<accession>Q8LFD3</accession>
<accession>Q9ZVG2</accession>
<keyword id="KW-0238">DNA-binding</keyword>
<keyword id="KW-0371">Homeobox</keyword>
<keyword id="KW-0539">Nucleus</keyword>
<keyword id="KW-1185">Reference proteome</keyword>
<keyword id="KW-0804">Transcription</keyword>
<keyword id="KW-0805">Transcription regulation</keyword>
<reference key="1">
    <citation type="journal article" date="2000" name="Nature">
        <title>Sequence and analysis of chromosome 1 of the plant Arabidopsis thaliana.</title>
        <authorList>
            <person name="Theologis A."/>
            <person name="Ecker J.R."/>
            <person name="Palm C.J."/>
            <person name="Federspiel N.A."/>
            <person name="Kaul S."/>
            <person name="White O."/>
            <person name="Alonso J."/>
            <person name="Altafi H."/>
            <person name="Araujo R."/>
            <person name="Bowman C.L."/>
            <person name="Brooks S.Y."/>
            <person name="Buehler E."/>
            <person name="Chan A."/>
            <person name="Chao Q."/>
            <person name="Chen H."/>
            <person name="Cheuk R.F."/>
            <person name="Chin C.W."/>
            <person name="Chung M.K."/>
            <person name="Conn L."/>
            <person name="Conway A.B."/>
            <person name="Conway A.R."/>
            <person name="Creasy T.H."/>
            <person name="Dewar K."/>
            <person name="Dunn P."/>
            <person name="Etgu P."/>
            <person name="Feldblyum T.V."/>
            <person name="Feng J.-D."/>
            <person name="Fong B."/>
            <person name="Fujii C.Y."/>
            <person name="Gill J.E."/>
            <person name="Goldsmith A.D."/>
            <person name="Haas B."/>
            <person name="Hansen N.F."/>
            <person name="Hughes B."/>
            <person name="Huizar L."/>
            <person name="Hunter J.L."/>
            <person name="Jenkins J."/>
            <person name="Johnson-Hopson C."/>
            <person name="Khan S."/>
            <person name="Khaykin E."/>
            <person name="Kim C.J."/>
            <person name="Koo H.L."/>
            <person name="Kremenetskaia I."/>
            <person name="Kurtz D.B."/>
            <person name="Kwan A."/>
            <person name="Lam B."/>
            <person name="Langin-Hooper S."/>
            <person name="Lee A."/>
            <person name="Lee J.M."/>
            <person name="Lenz C.A."/>
            <person name="Li J.H."/>
            <person name="Li Y.-P."/>
            <person name="Lin X."/>
            <person name="Liu S.X."/>
            <person name="Liu Z.A."/>
            <person name="Luros J.S."/>
            <person name="Maiti R."/>
            <person name="Marziali A."/>
            <person name="Militscher J."/>
            <person name="Miranda M."/>
            <person name="Nguyen M."/>
            <person name="Nierman W.C."/>
            <person name="Osborne B.I."/>
            <person name="Pai G."/>
            <person name="Peterson J."/>
            <person name="Pham P.K."/>
            <person name="Rizzo M."/>
            <person name="Rooney T."/>
            <person name="Rowley D."/>
            <person name="Sakano H."/>
            <person name="Salzberg S.L."/>
            <person name="Schwartz J.R."/>
            <person name="Shinn P."/>
            <person name="Southwick A.M."/>
            <person name="Sun H."/>
            <person name="Tallon L.J."/>
            <person name="Tambunga G."/>
            <person name="Toriumi M.J."/>
            <person name="Town C.D."/>
            <person name="Utterback T."/>
            <person name="Van Aken S."/>
            <person name="Vaysberg M."/>
            <person name="Vysotskaia V.S."/>
            <person name="Walker M."/>
            <person name="Wu D."/>
            <person name="Yu G."/>
            <person name="Fraser C.M."/>
            <person name="Venter J.C."/>
            <person name="Davis R.W."/>
        </authorList>
    </citation>
    <scope>NUCLEOTIDE SEQUENCE [LARGE SCALE GENOMIC DNA]</scope>
    <source>
        <strain>cv. Columbia</strain>
    </source>
</reference>
<reference key="2">
    <citation type="journal article" date="2017" name="Plant J.">
        <title>Araport11: a complete reannotation of the Arabidopsis thaliana reference genome.</title>
        <authorList>
            <person name="Cheng C.Y."/>
            <person name="Krishnakumar V."/>
            <person name="Chan A.P."/>
            <person name="Thibaud-Nissen F."/>
            <person name="Schobel S."/>
            <person name="Town C.D."/>
        </authorList>
    </citation>
    <scope>GENOME REANNOTATION</scope>
    <source>
        <strain>cv. Columbia</strain>
    </source>
</reference>
<reference key="3">
    <citation type="journal article" date="2003" name="Science">
        <title>Empirical analysis of transcriptional activity in the Arabidopsis genome.</title>
        <authorList>
            <person name="Yamada K."/>
            <person name="Lim J."/>
            <person name="Dale J.M."/>
            <person name="Chen H."/>
            <person name="Shinn P."/>
            <person name="Palm C.J."/>
            <person name="Southwick A.M."/>
            <person name="Wu H.C."/>
            <person name="Kim C.J."/>
            <person name="Nguyen M."/>
            <person name="Pham P.K."/>
            <person name="Cheuk R.F."/>
            <person name="Karlin-Newmann G."/>
            <person name="Liu S.X."/>
            <person name="Lam B."/>
            <person name="Sakano H."/>
            <person name="Wu T."/>
            <person name="Yu G."/>
            <person name="Miranda M."/>
            <person name="Quach H.L."/>
            <person name="Tripp M."/>
            <person name="Chang C.H."/>
            <person name="Lee J.M."/>
            <person name="Toriumi M.J."/>
            <person name="Chan M.M."/>
            <person name="Tang C.C."/>
            <person name="Onodera C.S."/>
            <person name="Deng J.M."/>
            <person name="Akiyama K."/>
            <person name="Ansari Y."/>
            <person name="Arakawa T."/>
            <person name="Banh J."/>
            <person name="Banno F."/>
            <person name="Bowser L."/>
            <person name="Brooks S.Y."/>
            <person name="Carninci P."/>
            <person name="Chao Q."/>
            <person name="Choy N."/>
            <person name="Enju A."/>
            <person name="Goldsmith A.D."/>
            <person name="Gurjal M."/>
            <person name="Hansen N.F."/>
            <person name="Hayashizaki Y."/>
            <person name="Johnson-Hopson C."/>
            <person name="Hsuan V.W."/>
            <person name="Iida K."/>
            <person name="Karnes M."/>
            <person name="Khan S."/>
            <person name="Koesema E."/>
            <person name="Ishida J."/>
            <person name="Jiang P.X."/>
            <person name="Jones T."/>
            <person name="Kawai J."/>
            <person name="Kamiya A."/>
            <person name="Meyers C."/>
            <person name="Nakajima M."/>
            <person name="Narusaka M."/>
            <person name="Seki M."/>
            <person name="Sakurai T."/>
            <person name="Satou M."/>
            <person name="Tamse R."/>
            <person name="Vaysberg M."/>
            <person name="Wallender E.K."/>
            <person name="Wong C."/>
            <person name="Yamamura Y."/>
            <person name="Yuan S."/>
            <person name="Shinozaki K."/>
            <person name="Davis R.W."/>
            <person name="Theologis A."/>
            <person name="Ecker J.R."/>
        </authorList>
    </citation>
    <scope>NUCLEOTIDE SEQUENCE [LARGE SCALE MRNA]</scope>
    <source>
        <strain>cv. Columbia</strain>
    </source>
</reference>
<reference key="4">
    <citation type="submission" date="2006-07" db="EMBL/GenBank/DDBJ databases">
        <title>Large-scale analysis of RIKEN Arabidopsis full-length (RAFL) cDNAs.</title>
        <authorList>
            <person name="Totoki Y."/>
            <person name="Seki M."/>
            <person name="Ishida J."/>
            <person name="Nakajima M."/>
            <person name="Enju A."/>
            <person name="Kamiya A."/>
            <person name="Narusaka M."/>
            <person name="Shin-i T."/>
            <person name="Nakagawa M."/>
            <person name="Sakamoto N."/>
            <person name="Oishi K."/>
            <person name="Kohara Y."/>
            <person name="Kobayashi M."/>
            <person name="Toyoda A."/>
            <person name="Sakaki Y."/>
            <person name="Sakurai T."/>
            <person name="Iida K."/>
            <person name="Akiyama K."/>
            <person name="Satou M."/>
            <person name="Toyoda T."/>
            <person name="Konagaya A."/>
            <person name="Carninci P."/>
            <person name="Kawai J."/>
            <person name="Hayashizaki Y."/>
            <person name="Shinozaki K."/>
        </authorList>
    </citation>
    <scope>NUCLEOTIDE SEQUENCE [LARGE SCALE MRNA]</scope>
    <source>
        <strain>cv. Columbia</strain>
    </source>
</reference>
<reference key="5">
    <citation type="submission" date="2002-03" db="EMBL/GenBank/DDBJ databases">
        <title>Full-length cDNA from Arabidopsis thaliana.</title>
        <authorList>
            <person name="Brover V.V."/>
            <person name="Troukhan M.E."/>
            <person name="Alexandrov N.A."/>
            <person name="Lu Y.-P."/>
            <person name="Flavell R.B."/>
            <person name="Feldmann K.A."/>
        </authorList>
    </citation>
    <scope>NUCLEOTIDE SEQUENCE [LARGE SCALE MRNA]</scope>
</reference>
<reference key="6">
    <citation type="journal article" date="2005" name="Plant Physiol.">
        <title>Homeodomain leucine zipper class I genes in Arabidopsis. Expression patterns and phylogenetic relationships.</title>
        <authorList>
            <person name="Henriksson E."/>
            <person name="Olsson A.S.B."/>
            <person name="Johannesson H."/>
            <person name="Johansson H."/>
            <person name="Hanson J."/>
            <person name="Engstroem P."/>
            <person name="Soederman E."/>
        </authorList>
    </citation>
    <scope>GENE FAMILY</scope>
    <scope>TISSUE SPECIFICITY</scope>
</reference>
<reference key="7">
    <citation type="journal article" date="2007" name="Plant Cell Rep.">
        <title>ATHB23, an Arabidopsis class I homeodomain-leucine zipper gene, is expressed in the adaxial region of young leaves.</title>
        <authorList>
            <person name="Kim Y.-K."/>
            <person name="Son O."/>
            <person name="Kim M.-R."/>
            <person name="Nam K.-H."/>
            <person name="Kim G.-T."/>
            <person name="Lee M.-S."/>
            <person name="Choi S.-Y."/>
            <person name="Cheon C.-I."/>
        </authorList>
    </citation>
    <scope>TISSUE SPECIFICITY</scope>
    <scope>INDUCTION</scope>
</reference>
<sequence length="255" mass="29663">MSCNNNGLAFFPENFSLQNHHQEEEDHPQLLQDFHGFLGKRSPMNNVQGFCNLDMNGDEEYSDDGSKMGEKKRRLNMEQLKALEKDFELGNKLESDRKLELARALGLQPRQIAIWFQNRRARSKTKQLEKDYDMLKRQFESLRDENEVLQTQNQKLQAQVMALKSREPIESINLNKETEGSCSDRSENISGDIRPPEIDSQFALGHPPTTTTMQFFQNSSSEQRMVKEENSISNMFCGIDDQSGFWPWLDQQQYN</sequence>
<feature type="chain" id="PRO_0000257800" description="Homeobox-leucine zipper protein ATHB-23">
    <location>
        <begin position="1"/>
        <end position="255"/>
    </location>
</feature>
<feature type="DNA-binding region" description="Homeobox" evidence="2">
    <location>
        <begin position="68"/>
        <end position="127"/>
    </location>
</feature>
<feature type="region of interest" description="Leucine-zipper">
    <location>
        <begin position="128"/>
        <end position="163"/>
    </location>
</feature>
<organism>
    <name type="scientific">Arabidopsis thaliana</name>
    <name type="common">Mouse-ear cress</name>
    <dbReference type="NCBI Taxonomy" id="3702"/>
    <lineage>
        <taxon>Eukaryota</taxon>
        <taxon>Viridiplantae</taxon>
        <taxon>Streptophyta</taxon>
        <taxon>Embryophyta</taxon>
        <taxon>Tracheophyta</taxon>
        <taxon>Spermatophyta</taxon>
        <taxon>Magnoliopsida</taxon>
        <taxon>eudicotyledons</taxon>
        <taxon>Gunneridae</taxon>
        <taxon>Pentapetalae</taxon>
        <taxon>rosids</taxon>
        <taxon>malvids</taxon>
        <taxon>Brassicales</taxon>
        <taxon>Brassicaceae</taxon>
        <taxon>Camelineae</taxon>
        <taxon>Arabidopsis</taxon>
    </lineage>
</organism>
<protein>
    <recommendedName>
        <fullName>Homeobox-leucine zipper protein ATHB-23</fullName>
    </recommendedName>
    <alternativeName>
        <fullName>HD-ZIP protein ATHB-23</fullName>
    </alternativeName>
    <alternativeName>
        <fullName>Homeodomain transcription factor ATHB-23</fullName>
    </alternativeName>
</protein>
<comment type="function">
    <text evidence="1">Probable transcription factor.</text>
</comment>
<comment type="subcellular location">
    <subcellularLocation>
        <location evidence="5">Nucleus</location>
    </subcellularLocation>
</comment>
<comment type="tissue specificity">
    <text evidence="3 4">Expressed in young leaves, in the adaxial domain of leaf primordia and the rib meristem. Expressed in the styles of flowers and siliques.</text>
</comment>
<comment type="induction">
    <text evidence="4">By gibberellic acid (GA3).</text>
</comment>
<comment type="similarity">
    <text evidence="5">Belongs to the HD-ZIP homeobox family. Class I subfamily.</text>
</comment>
<comment type="sequence caution" evidence="5">
    <conflict type="erroneous gene model prediction">
        <sequence resource="EMBL-CDS" id="AAD14502"/>
    </conflict>
</comment>
<name>ATB23_ARATH</name>